<evidence type="ECO:0000255" key="1">
    <source>
        <dbReference type="HAMAP-Rule" id="MF_01629"/>
    </source>
</evidence>
<sequence>MNATDMDTEAAFRNDHETIAGEDPFAMFGEWLELAHRKEINDANAMALATADPDGLPNVRMVLLKGFDREGFVFYTNTESQKGVELAENMQAAAVLHWKSLRRQVRFRGTVNRVSAEEADAYFVSRARASRIGAWASKQSRPLENRTALAKSVATEAARFGISDIPRPAFWTGFRIVPNCIEFWMDKPFRLHDRLVFKRSHSGEPWSALKLYP</sequence>
<proteinExistence type="inferred from homology"/>
<reference key="1">
    <citation type="journal article" date="2002" name="Nature">
        <title>Genome sequence of the plant pathogen Ralstonia solanacearum.</title>
        <authorList>
            <person name="Salanoubat M."/>
            <person name="Genin S."/>
            <person name="Artiguenave F."/>
            <person name="Gouzy J."/>
            <person name="Mangenot S."/>
            <person name="Arlat M."/>
            <person name="Billault A."/>
            <person name="Brottier P."/>
            <person name="Camus J.-C."/>
            <person name="Cattolico L."/>
            <person name="Chandler M."/>
            <person name="Choisne N."/>
            <person name="Claudel-Renard C."/>
            <person name="Cunnac S."/>
            <person name="Demange N."/>
            <person name="Gaspin C."/>
            <person name="Lavie M."/>
            <person name="Moisan A."/>
            <person name="Robert C."/>
            <person name="Saurin W."/>
            <person name="Schiex T."/>
            <person name="Siguier P."/>
            <person name="Thebault P."/>
            <person name="Whalen M."/>
            <person name="Wincker P."/>
            <person name="Levy M."/>
            <person name="Weissenbach J."/>
            <person name="Boucher C.A."/>
        </authorList>
    </citation>
    <scope>NUCLEOTIDE SEQUENCE [LARGE SCALE GENOMIC DNA]</scope>
    <source>
        <strain>ATCC BAA-1114 / GMI1000</strain>
    </source>
</reference>
<feature type="chain" id="PRO_0000167745" description="Pyridoxine/pyridoxamine 5'-phosphate oxidase 2">
    <location>
        <begin position="1"/>
        <end position="213"/>
    </location>
</feature>
<feature type="binding site" evidence="1">
    <location>
        <begin position="60"/>
        <end position="65"/>
    </location>
    <ligand>
        <name>FMN</name>
        <dbReference type="ChEBI" id="CHEBI:58210"/>
    </ligand>
</feature>
<feature type="binding site" evidence="1">
    <location>
        <position position="65"/>
    </location>
    <ligand>
        <name>substrate</name>
    </ligand>
</feature>
<feature type="binding site" evidence="1">
    <location>
        <begin position="75"/>
        <end position="76"/>
    </location>
    <ligand>
        <name>FMN</name>
        <dbReference type="ChEBI" id="CHEBI:58210"/>
    </ligand>
</feature>
<feature type="binding site" evidence="1">
    <location>
        <position position="82"/>
    </location>
    <ligand>
        <name>FMN</name>
        <dbReference type="ChEBI" id="CHEBI:58210"/>
    </ligand>
</feature>
<feature type="binding site" evidence="1">
    <location>
        <position position="104"/>
    </location>
    <ligand>
        <name>FMN</name>
        <dbReference type="ChEBI" id="CHEBI:58210"/>
    </ligand>
</feature>
<feature type="binding site" evidence="1">
    <location>
        <position position="122"/>
    </location>
    <ligand>
        <name>substrate</name>
    </ligand>
</feature>
<feature type="binding site" evidence="1">
    <location>
        <position position="126"/>
    </location>
    <ligand>
        <name>substrate</name>
    </ligand>
</feature>
<feature type="binding site" evidence="1">
    <location>
        <position position="130"/>
    </location>
    <ligand>
        <name>substrate</name>
    </ligand>
</feature>
<feature type="binding site" evidence="1">
    <location>
        <begin position="139"/>
        <end position="140"/>
    </location>
    <ligand>
        <name>FMN</name>
        <dbReference type="ChEBI" id="CHEBI:58210"/>
    </ligand>
</feature>
<feature type="binding site" evidence="1">
    <location>
        <position position="184"/>
    </location>
    <ligand>
        <name>FMN</name>
        <dbReference type="ChEBI" id="CHEBI:58210"/>
    </ligand>
</feature>
<feature type="binding site" evidence="1">
    <location>
        <begin position="190"/>
        <end position="192"/>
    </location>
    <ligand>
        <name>substrate</name>
    </ligand>
</feature>
<feature type="binding site" evidence="1">
    <location>
        <position position="194"/>
    </location>
    <ligand>
        <name>FMN</name>
        <dbReference type="ChEBI" id="CHEBI:58210"/>
    </ligand>
</feature>
<accession>Q8XS03</accession>
<dbReference type="EC" id="1.4.3.5" evidence="1"/>
<dbReference type="EMBL" id="AL646053">
    <property type="protein sequence ID" value="CAD17829.1"/>
    <property type="molecule type" value="Genomic_DNA"/>
</dbReference>
<dbReference type="SMR" id="Q8XS03"/>
<dbReference type="STRING" id="267608.RSp0678"/>
<dbReference type="EnsemblBacteria" id="CAD17829">
    <property type="protein sequence ID" value="CAD17829"/>
    <property type="gene ID" value="RSp0678"/>
</dbReference>
<dbReference type="KEGG" id="rso:RSp0678"/>
<dbReference type="eggNOG" id="COG0259">
    <property type="taxonomic scope" value="Bacteria"/>
</dbReference>
<dbReference type="HOGENOM" id="CLU_032263_2_3_4"/>
<dbReference type="UniPathway" id="UPA01068">
    <property type="reaction ID" value="UER00304"/>
</dbReference>
<dbReference type="UniPathway" id="UPA01068">
    <property type="reaction ID" value="UER00305"/>
</dbReference>
<dbReference type="Proteomes" id="UP000001436">
    <property type="component" value="Plasmid megaplasmid Rsp"/>
</dbReference>
<dbReference type="GO" id="GO:0010181">
    <property type="term" value="F:FMN binding"/>
    <property type="evidence" value="ECO:0007669"/>
    <property type="project" value="UniProtKB-UniRule"/>
</dbReference>
<dbReference type="GO" id="GO:0004733">
    <property type="term" value="F:pyridoxamine phosphate oxidase activity"/>
    <property type="evidence" value="ECO:0007669"/>
    <property type="project" value="UniProtKB-UniRule"/>
</dbReference>
<dbReference type="GO" id="GO:0008615">
    <property type="term" value="P:pyridoxine biosynthetic process"/>
    <property type="evidence" value="ECO:0007669"/>
    <property type="project" value="UniProtKB-KW"/>
</dbReference>
<dbReference type="Gene3D" id="2.30.110.10">
    <property type="entry name" value="Electron Transport, Fmn-binding Protein, Chain A"/>
    <property type="match status" value="1"/>
</dbReference>
<dbReference type="HAMAP" id="MF_01629">
    <property type="entry name" value="PdxH"/>
    <property type="match status" value="1"/>
</dbReference>
<dbReference type="InterPro" id="IPR000659">
    <property type="entry name" value="Pyridox_Oxase"/>
</dbReference>
<dbReference type="InterPro" id="IPR019740">
    <property type="entry name" value="Pyridox_Oxase_CS"/>
</dbReference>
<dbReference type="InterPro" id="IPR011576">
    <property type="entry name" value="Pyridox_Oxase_N"/>
</dbReference>
<dbReference type="InterPro" id="IPR019576">
    <property type="entry name" value="Pyridoxamine_oxidase_dimer_C"/>
</dbReference>
<dbReference type="InterPro" id="IPR012349">
    <property type="entry name" value="Split_barrel_FMN-bd"/>
</dbReference>
<dbReference type="NCBIfam" id="TIGR00558">
    <property type="entry name" value="pdxH"/>
    <property type="match status" value="1"/>
</dbReference>
<dbReference type="NCBIfam" id="NF004231">
    <property type="entry name" value="PRK05679.1"/>
    <property type="match status" value="1"/>
</dbReference>
<dbReference type="PANTHER" id="PTHR10851:SF0">
    <property type="entry name" value="PYRIDOXINE-5'-PHOSPHATE OXIDASE"/>
    <property type="match status" value="1"/>
</dbReference>
<dbReference type="PANTHER" id="PTHR10851">
    <property type="entry name" value="PYRIDOXINE-5-PHOSPHATE OXIDASE"/>
    <property type="match status" value="1"/>
</dbReference>
<dbReference type="Pfam" id="PF10590">
    <property type="entry name" value="PNP_phzG_C"/>
    <property type="match status" value="1"/>
</dbReference>
<dbReference type="Pfam" id="PF01243">
    <property type="entry name" value="PNPOx_N"/>
    <property type="match status" value="1"/>
</dbReference>
<dbReference type="PIRSF" id="PIRSF000190">
    <property type="entry name" value="Pyd_amn-ph_oxd"/>
    <property type="match status" value="1"/>
</dbReference>
<dbReference type="SUPFAM" id="SSF50475">
    <property type="entry name" value="FMN-binding split barrel"/>
    <property type="match status" value="1"/>
</dbReference>
<dbReference type="PROSITE" id="PS01064">
    <property type="entry name" value="PYRIDOX_OXIDASE"/>
    <property type="match status" value="1"/>
</dbReference>
<geneLocation type="plasmid">
    <name>megaplasmid Rsp</name>
</geneLocation>
<comment type="function">
    <text evidence="1">Catalyzes the oxidation of either pyridoxine 5'-phosphate (PNP) or pyridoxamine 5'-phosphate (PMP) into pyridoxal 5'-phosphate (PLP).</text>
</comment>
<comment type="catalytic activity">
    <reaction evidence="1">
        <text>pyridoxamine 5'-phosphate + O2 + H2O = pyridoxal 5'-phosphate + H2O2 + NH4(+)</text>
        <dbReference type="Rhea" id="RHEA:15817"/>
        <dbReference type="ChEBI" id="CHEBI:15377"/>
        <dbReference type="ChEBI" id="CHEBI:15379"/>
        <dbReference type="ChEBI" id="CHEBI:16240"/>
        <dbReference type="ChEBI" id="CHEBI:28938"/>
        <dbReference type="ChEBI" id="CHEBI:58451"/>
        <dbReference type="ChEBI" id="CHEBI:597326"/>
        <dbReference type="EC" id="1.4.3.5"/>
    </reaction>
</comment>
<comment type="catalytic activity">
    <reaction evidence="1">
        <text>pyridoxine 5'-phosphate + O2 = pyridoxal 5'-phosphate + H2O2</text>
        <dbReference type="Rhea" id="RHEA:15149"/>
        <dbReference type="ChEBI" id="CHEBI:15379"/>
        <dbReference type="ChEBI" id="CHEBI:16240"/>
        <dbReference type="ChEBI" id="CHEBI:58589"/>
        <dbReference type="ChEBI" id="CHEBI:597326"/>
        <dbReference type="EC" id="1.4.3.5"/>
    </reaction>
</comment>
<comment type="cofactor">
    <cofactor evidence="1">
        <name>FMN</name>
        <dbReference type="ChEBI" id="CHEBI:58210"/>
    </cofactor>
    <text evidence="1">Binds 1 FMN per subunit.</text>
</comment>
<comment type="pathway">
    <text evidence="1">Cofactor metabolism; pyridoxal 5'-phosphate salvage; pyridoxal 5'-phosphate from pyridoxamine 5'-phosphate: step 1/1.</text>
</comment>
<comment type="pathway">
    <text evidence="1">Cofactor metabolism; pyridoxal 5'-phosphate salvage; pyridoxal 5'-phosphate from pyridoxine 5'-phosphate: step 1/1.</text>
</comment>
<comment type="subunit">
    <text evidence="1">Homodimer.</text>
</comment>
<comment type="similarity">
    <text evidence="1">Belongs to the pyridoxamine 5'-phosphate oxidase family.</text>
</comment>
<keyword id="KW-0285">Flavoprotein</keyword>
<keyword id="KW-0288">FMN</keyword>
<keyword id="KW-0560">Oxidoreductase</keyword>
<keyword id="KW-0614">Plasmid</keyword>
<keyword id="KW-0664">Pyridoxine biosynthesis</keyword>
<keyword id="KW-1185">Reference proteome</keyword>
<protein>
    <recommendedName>
        <fullName evidence="1">Pyridoxine/pyridoxamine 5'-phosphate oxidase 2</fullName>
        <ecNumber evidence="1">1.4.3.5</ecNumber>
    </recommendedName>
    <alternativeName>
        <fullName evidence="1">PNP/PMP oxidase 2</fullName>
        <shortName evidence="1">PNPOx 2</shortName>
    </alternativeName>
    <alternativeName>
        <fullName evidence="1">Pyridoxal 5'-phosphate synthase 2</fullName>
    </alternativeName>
</protein>
<organism>
    <name type="scientific">Ralstonia nicotianae (strain ATCC BAA-1114 / GMI1000)</name>
    <name type="common">Ralstonia solanacearum</name>
    <dbReference type="NCBI Taxonomy" id="267608"/>
    <lineage>
        <taxon>Bacteria</taxon>
        <taxon>Pseudomonadati</taxon>
        <taxon>Pseudomonadota</taxon>
        <taxon>Betaproteobacteria</taxon>
        <taxon>Burkholderiales</taxon>
        <taxon>Burkholderiaceae</taxon>
        <taxon>Ralstonia</taxon>
        <taxon>Ralstonia solanacearum species complex</taxon>
    </lineage>
</organism>
<gene>
    <name evidence="1" type="primary">pdxH2</name>
    <name type="ordered locus">RSp0678</name>
    <name type="ORF">RS01771</name>
</gene>
<name>PDXH2_RALN1</name>